<dbReference type="EC" id="3.1.21.10" evidence="1"/>
<dbReference type="EMBL" id="CP000390">
    <property type="protein sequence ID" value="ABG64551.1"/>
    <property type="molecule type" value="Genomic_DNA"/>
</dbReference>
<dbReference type="SMR" id="Q11DH4"/>
<dbReference type="STRING" id="266779.Meso_3179"/>
<dbReference type="KEGG" id="mes:Meso_3179"/>
<dbReference type="eggNOG" id="COG0817">
    <property type="taxonomic scope" value="Bacteria"/>
</dbReference>
<dbReference type="HOGENOM" id="CLU_091257_1_0_5"/>
<dbReference type="OrthoDB" id="9805499at2"/>
<dbReference type="GO" id="GO:0005737">
    <property type="term" value="C:cytoplasm"/>
    <property type="evidence" value="ECO:0007669"/>
    <property type="project" value="UniProtKB-SubCell"/>
</dbReference>
<dbReference type="GO" id="GO:0048476">
    <property type="term" value="C:Holliday junction resolvase complex"/>
    <property type="evidence" value="ECO:0007669"/>
    <property type="project" value="UniProtKB-UniRule"/>
</dbReference>
<dbReference type="GO" id="GO:0008821">
    <property type="term" value="F:crossover junction DNA endonuclease activity"/>
    <property type="evidence" value="ECO:0007669"/>
    <property type="project" value="UniProtKB-UniRule"/>
</dbReference>
<dbReference type="GO" id="GO:0003677">
    <property type="term" value="F:DNA binding"/>
    <property type="evidence" value="ECO:0007669"/>
    <property type="project" value="UniProtKB-KW"/>
</dbReference>
<dbReference type="GO" id="GO:0000287">
    <property type="term" value="F:magnesium ion binding"/>
    <property type="evidence" value="ECO:0007669"/>
    <property type="project" value="UniProtKB-UniRule"/>
</dbReference>
<dbReference type="GO" id="GO:0006310">
    <property type="term" value="P:DNA recombination"/>
    <property type="evidence" value="ECO:0007669"/>
    <property type="project" value="UniProtKB-UniRule"/>
</dbReference>
<dbReference type="GO" id="GO:0006281">
    <property type="term" value="P:DNA repair"/>
    <property type="evidence" value="ECO:0007669"/>
    <property type="project" value="UniProtKB-UniRule"/>
</dbReference>
<dbReference type="CDD" id="cd16962">
    <property type="entry name" value="RuvC"/>
    <property type="match status" value="1"/>
</dbReference>
<dbReference type="FunFam" id="3.30.420.10:FF:000002">
    <property type="entry name" value="Crossover junction endodeoxyribonuclease RuvC"/>
    <property type="match status" value="1"/>
</dbReference>
<dbReference type="Gene3D" id="3.30.420.10">
    <property type="entry name" value="Ribonuclease H-like superfamily/Ribonuclease H"/>
    <property type="match status" value="1"/>
</dbReference>
<dbReference type="HAMAP" id="MF_00034">
    <property type="entry name" value="RuvC"/>
    <property type="match status" value="1"/>
</dbReference>
<dbReference type="InterPro" id="IPR012337">
    <property type="entry name" value="RNaseH-like_sf"/>
</dbReference>
<dbReference type="InterPro" id="IPR036397">
    <property type="entry name" value="RNaseH_sf"/>
</dbReference>
<dbReference type="InterPro" id="IPR020563">
    <property type="entry name" value="X-over_junc_endoDNase_Mg_BS"/>
</dbReference>
<dbReference type="InterPro" id="IPR002176">
    <property type="entry name" value="X-over_junc_endoDNase_RuvC"/>
</dbReference>
<dbReference type="NCBIfam" id="TIGR00228">
    <property type="entry name" value="ruvC"/>
    <property type="match status" value="1"/>
</dbReference>
<dbReference type="PANTHER" id="PTHR30194">
    <property type="entry name" value="CROSSOVER JUNCTION ENDODEOXYRIBONUCLEASE RUVC"/>
    <property type="match status" value="1"/>
</dbReference>
<dbReference type="PANTHER" id="PTHR30194:SF3">
    <property type="entry name" value="CROSSOVER JUNCTION ENDODEOXYRIBONUCLEASE RUVC"/>
    <property type="match status" value="1"/>
</dbReference>
<dbReference type="Pfam" id="PF02075">
    <property type="entry name" value="RuvC"/>
    <property type="match status" value="1"/>
</dbReference>
<dbReference type="PRINTS" id="PR00696">
    <property type="entry name" value="RSOLVASERUVC"/>
</dbReference>
<dbReference type="SUPFAM" id="SSF53098">
    <property type="entry name" value="Ribonuclease H-like"/>
    <property type="match status" value="1"/>
</dbReference>
<dbReference type="PROSITE" id="PS01321">
    <property type="entry name" value="RUVC"/>
    <property type="match status" value="1"/>
</dbReference>
<proteinExistence type="inferred from homology"/>
<gene>
    <name evidence="1" type="primary">ruvC</name>
    <name type="ordered locus">Meso_3179</name>
</gene>
<comment type="function">
    <text evidence="1">The RuvA-RuvB-RuvC complex processes Holliday junction (HJ) DNA during genetic recombination and DNA repair. Endonuclease that resolves HJ intermediates. Cleaves cruciform DNA by making single-stranded nicks across the HJ at symmetrical positions within the homologous arms, yielding a 5'-phosphate and a 3'-hydroxyl group; requires a central core of homology in the junction. The consensus cleavage sequence is 5'-(A/T)TT(C/G)-3'. Cleavage occurs on the 3'-side of the TT dinucleotide at the point of strand exchange. HJ branch migration catalyzed by RuvA-RuvB allows RuvC to scan DNA until it finds its consensus sequence, where it cleaves and resolves the cruciform DNA.</text>
</comment>
<comment type="catalytic activity">
    <reaction evidence="1">
        <text>Endonucleolytic cleavage at a junction such as a reciprocal single-stranded crossover between two homologous DNA duplexes (Holliday junction).</text>
        <dbReference type="EC" id="3.1.21.10"/>
    </reaction>
</comment>
<comment type="cofactor">
    <cofactor evidence="1">
        <name>Mg(2+)</name>
        <dbReference type="ChEBI" id="CHEBI:18420"/>
    </cofactor>
    <text evidence="1">Binds 2 Mg(2+) ion per subunit.</text>
</comment>
<comment type="subunit">
    <text evidence="1">Homodimer which binds Holliday junction (HJ) DNA. The HJ becomes 2-fold symmetrical on binding to RuvC with unstacked arms; it has a different conformation from HJ DNA in complex with RuvA. In the full resolvosome a probable DNA-RuvA(4)-RuvB(12)-RuvC(2) complex forms which resolves the HJ.</text>
</comment>
<comment type="subcellular location">
    <subcellularLocation>
        <location evidence="1">Cytoplasm</location>
    </subcellularLocation>
</comment>
<comment type="similarity">
    <text evidence="1">Belongs to the RuvC family.</text>
</comment>
<reference key="1">
    <citation type="submission" date="2006-06" db="EMBL/GenBank/DDBJ databases">
        <title>Complete sequence of chromosome of Mesorhizobium sp. BNC1.</title>
        <authorList>
            <consortium name="US DOE Joint Genome Institute"/>
            <person name="Copeland A."/>
            <person name="Lucas S."/>
            <person name="Lapidus A."/>
            <person name="Barry K."/>
            <person name="Detter J.C."/>
            <person name="Glavina del Rio T."/>
            <person name="Hammon N."/>
            <person name="Israni S."/>
            <person name="Dalin E."/>
            <person name="Tice H."/>
            <person name="Pitluck S."/>
            <person name="Chertkov O."/>
            <person name="Brettin T."/>
            <person name="Bruce D."/>
            <person name="Han C."/>
            <person name="Tapia R."/>
            <person name="Gilna P."/>
            <person name="Schmutz J."/>
            <person name="Larimer F."/>
            <person name="Land M."/>
            <person name="Hauser L."/>
            <person name="Kyrpides N."/>
            <person name="Mikhailova N."/>
            <person name="Richardson P."/>
        </authorList>
    </citation>
    <scope>NUCLEOTIDE SEQUENCE [LARGE SCALE GENOMIC DNA]</scope>
    <source>
        <strain>BNC1</strain>
    </source>
</reference>
<feature type="chain" id="PRO_1000002775" description="Crossover junction endodeoxyribonuclease RuvC">
    <location>
        <begin position="1"/>
        <end position="171"/>
    </location>
</feature>
<feature type="active site" evidence="1">
    <location>
        <position position="11"/>
    </location>
</feature>
<feature type="active site" evidence="1">
    <location>
        <position position="71"/>
    </location>
</feature>
<feature type="active site" evidence="1">
    <location>
        <position position="143"/>
    </location>
</feature>
<feature type="binding site" evidence="1">
    <location>
        <position position="11"/>
    </location>
    <ligand>
        <name>Mg(2+)</name>
        <dbReference type="ChEBI" id="CHEBI:18420"/>
        <label>1</label>
    </ligand>
</feature>
<feature type="binding site" evidence="1">
    <location>
        <position position="71"/>
    </location>
    <ligand>
        <name>Mg(2+)</name>
        <dbReference type="ChEBI" id="CHEBI:18420"/>
        <label>2</label>
    </ligand>
</feature>
<feature type="binding site" evidence="1">
    <location>
        <position position="143"/>
    </location>
    <ligand>
        <name>Mg(2+)</name>
        <dbReference type="ChEBI" id="CHEBI:18420"/>
        <label>1</label>
    </ligand>
</feature>
<keyword id="KW-0963">Cytoplasm</keyword>
<keyword id="KW-0227">DNA damage</keyword>
<keyword id="KW-0233">DNA recombination</keyword>
<keyword id="KW-0234">DNA repair</keyword>
<keyword id="KW-0238">DNA-binding</keyword>
<keyword id="KW-0255">Endonuclease</keyword>
<keyword id="KW-0378">Hydrolase</keyword>
<keyword id="KW-0460">Magnesium</keyword>
<keyword id="KW-0479">Metal-binding</keyword>
<keyword id="KW-0540">Nuclease</keyword>
<name>RUVC_CHESB</name>
<protein>
    <recommendedName>
        <fullName evidence="1">Crossover junction endodeoxyribonuclease RuvC</fullName>
        <ecNumber evidence="1">3.1.21.10</ecNumber>
    </recommendedName>
    <alternativeName>
        <fullName evidence="1">Holliday junction nuclease RuvC</fullName>
    </alternativeName>
    <alternativeName>
        <fullName evidence="1">Holliday junction resolvase RuvC</fullName>
    </alternativeName>
</protein>
<evidence type="ECO:0000255" key="1">
    <source>
        <dbReference type="HAMAP-Rule" id="MF_00034"/>
    </source>
</evidence>
<accession>Q11DH4</accession>
<sequence length="171" mass="18288">MTGTIRIIGIDPGLRRTGWAVIETVGNSLRFIGAGTVRSNDKADLASRLCQLHDGLAEILHLHMPQEAAVEATFVNKDAVATLKLGQARGIAMLVPARAGLRVAEYAPNAVKKAVIGVGHGEKRQIHMMVKVLMPKALFDGDDAADAIAVAICHAHHRQSPAWRLALEAQP</sequence>
<organism>
    <name type="scientific">Chelativorans sp. (strain BNC1)</name>
    <dbReference type="NCBI Taxonomy" id="266779"/>
    <lineage>
        <taxon>Bacteria</taxon>
        <taxon>Pseudomonadati</taxon>
        <taxon>Pseudomonadota</taxon>
        <taxon>Alphaproteobacteria</taxon>
        <taxon>Hyphomicrobiales</taxon>
        <taxon>Phyllobacteriaceae</taxon>
        <taxon>Chelativorans</taxon>
    </lineage>
</organism>